<protein>
    <recommendedName>
        <fullName>Subtilisin-like protease 6</fullName>
        <ecNumber>3.4.21.-</ecNumber>
    </recommendedName>
</protein>
<organism>
    <name type="scientific">Trichophyton tonsurans</name>
    <name type="common">Scalp ringworm fungus</name>
    <dbReference type="NCBI Taxonomy" id="34387"/>
    <lineage>
        <taxon>Eukaryota</taxon>
        <taxon>Fungi</taxon>
        <taxon>Dikarya</taxon>
        <taxon>Ascomycota</taxon>
        <taxon>Pezizomycotina</taxon>
        <taxon>Eurotiomycetes</taxon>
        <taxon>Eurotiomycetidae</taxon>
        <taxon>Onygenales</taxon>
        <taxon>Arthrodermataceae</taxon>
        <taxon>Trichophyton</taxon>
    </lineage>
</organism>
<evidence type="ECO:0000250" key="1"/>
<evidence type="ECO:0000255" key="2"/>
<evidence type="ECO:0000255" key="3">
    <source>
        <dbReference type="PROSITE-ProRule" id="PRU01240"/>
    </source>
</evidence>
<evidence type="ECO:0000305" key="4"/>
<sequence>MGFITKAIPIVLAALSTVNGAKILEAGPHAETIPNKYIVVMKREVSDEAFSAHTTWLSQNLNRRVMRRSGSSKAMAGMQDKYSLGGIFRAYSGEFDDAMIKDISSHDDVDYIEPDFVVRTSTNGTNLTRQDNVPSWGLARVSSKKAGGTTYYYDSSAGKGVTAYVIDTGIDINHEDFRGRAKWGKNFVDDMDEDCNGHGTHVAGTVGGTKYGLAKGVSLVAVKVLDCEGSGSNSGVIKGMEWAMREASGGGNGTAKAAGKAVMNMSLGGTRSQASNQAAKAISDAGIFMAVAAGNENMDAQHSSPASEPSVCTVAASTEDDGKADFSNYGQLVDVYAPGKDITSLKPGGSTDTLSGTSMASPHVCGLGAYLIGLGKQGGPGLCDTIKEMAHDAIQRPGEGTTSKLIYNGSGK</sequence>
<keyword id="KW-0325">Glycoprotein</keyword>
<keyword id="KW-0378">Hydrolase</keyword>
<keyword id="KW-0645">Protease</keyword>
<keyword id="KW-0964">Secreted</keyword>
<keyword id="KW-0720">Serine protease</keyword>
<keyword id="KW-0732">Signal</keyword>
<keyword id="KW-0843">Virulence</keyword>
<keyword id="KW-0865">Zymogen</keyword>
<proteinExistence type="inferred from homology"/>
<accession>Q3ZEJ8</accession>
<reference key="1">
    <citation type="journal article" date="2005" name="Mycopathologia">
        <title>Characterization of the ALP1 gene locus of Trichophyton tonsurans.</title>
        <authorList>
            <person name="Bhathena A."/>
            <person name="Gaedigk R."/>
            <person name="Abdel-Rahman S.M."/>
        </authorList>
    </citation>
    <scope>NUCLEOTIDE SEQUENCE [GENOMIC DNA]</scope>
</reference>
<dbReference type="EC" id="3.4.21.-"/>
<dbReference type="EMBL" id="AY910749">
    <property type="protein sequence ID" value="AAX93514.1"/>
    <property type="molecule type" value="Genomic_DNA"/>
</dbReference>
<dbReference type="SMR" id="Q3ZEJ8"/>
<dbReference type="GlyCosmos" id="Q3ZEJ8">
    <property type="glycosylation" value="5 sites, No reported glycans"/>
</dbReference>
<dbReference type="VEuPathDB" id="FungiDB:TESG_02550"/>
<dbReference type="GO" id="GO:0005576">
    <property type="term" value="C:extracellular region"/>
    <property type="evidence" value="ECO:0007669"/>
    <property type="project" value="UniProtKB-SubCell"/>
</dbReference>
<dbReference type="GO" id="GO:0004252">
    <property type="term" value="F:serine-type endopeptidase activity"/>
    <property type="evidence" value="ECO:0007669"/>
    <property type="project" value="InterPro"/>
</dbReference>
<dbReference type="GO" id="GO:0006508">
    <property type="term" value="P:proteolysis"/>
    <property type="evidence" value="ECO:0007669"/>
    <property type="project" value="UniProtKB-KW"/>
</dbReference>
<dbReference type="CDD" id="cd04077">
    <property type="entry name" value="Peptidases_S8_PCSK9_ProteinaseK_like"/>
    <property type="match status" value="1"/>
</dbReference>
<dbReference type="FunFam" id="3.40.50.200:FF:000014">
    <property type="entry name" value="Proteinase K"/>
    <property type="match status" value="1"/>
</dbReference>
<dbReference type="Gene3D" id="3.30.70.80">
    <property type="entry name" value="Peptidase S8 propeptide/proteinase inhibitor I9"/>
    <property type="match status" value="1"/>
</dbReference>
<dbReference type="Gene3D" id="3.40.50.200">
    <property type="entry name" value="Peptidase S8/S53 domain"/>
    <property type="match status" value="1"/>
</dbReference>
<dbReference type="InterPro" id="IPR034193">
    <property type="entry name" value="PCSK9_ProteinaseK-like"/>
</dbReference>
<dbReference type="InterPro" id="IPR000209">
    <property type="entry name" value="Peptidase_S8/S53_dom"/>
</dbReference>
<dbReference type="InterPro" id="IPR036852">
    <property type="entry name" value="Peptidase_S8/S53_dom_sf"/>
</dbReference>
<dbReference type="InterPro" id="IPR023827">
    <property type="entry name" value="Peptidase_S8_Asp-AS"/>
</dbReference>
<dbReference type="InterPro" id="IPR022398">
    <property type="entry name" value="Peptidase_S8_His-AS"/>
</dbReference>
<dbReference type="InterPro" id="IPR023828">
    <property type="entry name" value="Peptidase_S8_Ser-AS"/>
</dbReference>
<dbReference type="InterPro" id="IPR050131">
    <property type="entry name" value="Peptidase_S8_subtilisin-like"/>
</dbReference>
<dbReference type="InterPro" id="IPR015500">
    <property type="entry name" value="Peptidase_S8_subtilisin-rel"/>
</dbReference>
<dbReference type="InterPro" id="IPR010259">
    <property type="entry name" value="S8pro/Inhibitor_I9"/>
</dbReference>
<dbReference type="InterPro" id="IPR037045">
    <property type="entry name" value="S8pro/Inhibitor_I9_sf"/>
</dbReference>
<dbReference type="PANTHER" id="PTHR43806:SF11">
    <property type="entry name" value="CEREVISIN-RELATED"/>
    <property type="match status" value="1"/>
</dbReference>
<dbReference type="PANTHER" id="PTHR43806">
    <property type="entry name" value="PEPTIDASE S8"/>
    <property type="match status" value="1"/>
</dbReference>
<dbReference type="Pfam" id="PF05922">
    <property type="entry name" value="Inhibitor_I9"/>
    <property type="match status" value="1"/>
</dbReference>
<dbReference type="Pfam" id="PF00082">
    <property type="entry name" value="Peptidase_S8"/>
    <property type="match status" value="1"/>
</dbReference>
<dbReference type="PRINTS" id="PR00723">
    <property type="entry name" value="SUBTILISIN"/>
</dbReference>
<dbReference type="SUPFAM" id="SSF54897">
    <property type="entry name" value="Protease propeptides/inhibitors"/>
    <property type="match status" value="1"/>
</dbReference>
<dbReference type="SUPFAM" id="SSF52743">
    <property type="entry name" value="Subtilisin-like"/>
    <property type="match status" value="1"/>
</dbReference>
<dbReference type="PROSITE" id="PS51892">
    <property type="entry name" value="SUBTILASE"/>
    <property type="match status" value="1"/>
</dbReference>
<dbReference type="PROSITE" id="PS00136">
    <property type="entry name" value="SUBTILASE_ASP"/>
    <property type="match status" value="1"/>
</dbReference>
<dbReference type="PROSITE" id="PS00137">
    <property type="entry name" value="SUBTILASE_HIS"/>
    <property type="match status" value="1"/>
</dbReference>
<dbReference type="PROSITE" id="PS00138">
    <property type="entry name" value="SUBTILASE_SER"/>
    <property type="match status" value="1"/>
</dbReference>
<name>SUB6_TRITO</name>
<feature type="signal peptide" evidence="2">
    <location>
        <begin position="1"/>
        <end position="20"/>
    </location>
</feature>
<feature type="propeptide" id="PRO_0000380814" evidence="1">
    <location>
        <begin position="21"/>
        <end position="127"/>
    </location>
</feature>
<feature type="chain" id="PRO_0000380815" description="Subtilisin-like protease 6">
    <location>
        <begin position="128"/>
        <end position="412"/>
    </location>
</feature>
<feature type="domain" description="Inhibitor I9" evidence="2">
    <location>
        <begin position="36"/>
        <end position="120"/>
    </location>
</feature>
<feature type="domain" description="Peptidase S8" evidence="3">
    <location>
        <begin position="135"/>
        <end position="412"/>
    </location>
</feature>
<feature type="active site" description="Charge relay system" evidence="3">
    <location>
        <position position="167"/>
    </location>
</feature>
<feature type="active site" description="Charge relay system" evidence="3">
    <location>
        <position position="198"/>
    </location>
</feature>
<feature type="active site" description="Charge relay system" evidence="3">
    <location>
        <position position="358"/>
    </location>
</feature>
<feature type="glycosylation site" description="N-linked (GlcNAc...) asparagine" evidence="2">
    <location>
        <position position="123"/>
    </location>
</feature>
<feature type="glycosylation site" description="N-linked (GlcNAc...) asparagine" evidence="2">
    <location>
        <position position="126"/>
    </location>
</feature>
<feature type="glycosylation site" description="N-linked (GlcNAc...) asparagine" evidence="2">
    <location>
        <position position="252"/>
    </location>
</feature>
<feature type="glycosylation site" description="N-linked (GlcNAc...) asparagine" evidence="2">
    <location>
        <position position="264"/>
    </location>
</feature>
<feature type="glycosylation site" description="N-linked (GlcNAc...) asparagine" evidence="2">
    <location>
        <position position="408"/>
    </location>
</feature>
<gene>
    <name type="primary">SUB6</name>
    <name type="synonym">ALP1</name>
</gene>
<comment type="function">
    <text evidence="1">Secreted subtilisin-like serine protease with keratinolytic activity that contributes to pathogenicity.</text>
</comment>
<comment type="subcellular location">
    <subcellularLocation>
        <location evidence="1">Secreted</location>
    </subcellularLocation>
</comment>
<comment type="similarity">
    <text evidence="4">Belongs to the peptidase S8 family.</text>
</comment>